<gene>
    <name evidence="1" type="primary">atpG</name>
    <name evidence="1" type="synonym">atpC</name>
    <name type="ordered locus">syc1176_c</name>
</gene>
<keyword id="KW-0066">ATP synthesis</keyword>
<keyword id="KW-0139">CF(1)</keyword>
<keyword id="KW-0375">Hydrogen ion transport</keyword>
<keyword id="KW-0406">Ion transport</keyword>
<keyword id="KW-0472">Membrane</keyword>
<keyword id="KW-0793">Thylakoid</keyword>
<keyword id="KW-0813">Transport</keyword>
<organism>
    <name type="scientific">Synechococcus sp. (strain ATCC 27144 / PCC 6301 / SAUG 1402/1)</name>
    <name type="common">Anacystis nidulans</name>
    <dbReference type="NCBI Taxonomy" id="269084"/>
    <lineage>
        <taxon>Bacteria</taxon>
        <taxon>Bacillati</taxon>
        <taxon>Cyanobacteriota</taxon>
        <taxon>Cyanophyceae</taxon>
        <taxon>Synechococcales</taxon>
        <taxon>Synechococcaceae</taxon>
        <taxon>Synechococcus</taxon>
    </lineage>
</organism>
<name>ATPG_SYNP6</name>
<evidence type="ECO:0000255" key="1">
    <source>
        <dbReference type="HAMAP-Rule" id="MF_00815"/>
    </source>
</evidence>
<evidence type="ECO:0000305" key="2"/>
<protein>
    <recommendedName>
        <fullName evidence="1">ATP synthase gamma chain</fullName>
    </recommendedName>
    <alternativeName>
        <fullName evidence="1">ATP synthase F1 sector gamma subunit</fullName>
    </alternativeName>
    <alternativeName>
        <fullName evidence="1">F-ATPase gamma subunit</fullName>
    </alternativeName>
</protein>
<feature type="chain" id="PRO_0000073403" description="ATP synthase gamma chain">
    <location>
        <begin position="1"/>
        <end position="316"/>
    </location>
</feature>
<feature type="sequence conflict" description="In Ref. 1; CAA28929." evidence="2" ref="1">
    <original>Q</original>
    <variation>E</variation>
    <location>
        <position position="157"/>
    </location>
</feature>
<proteinExistence type="inferred from homology"/>
<dbReference type="EMBL" id="X05302">
    <property type="protein sequence ID" value="CAA28929.1"/>
    <property type="molecule type" value="Genomic_DNA"/>
</dbReference>
<dbReference type="EMBL" id="AP008231">
    <property type="protein sequence ID" value="BAD79366.1"/>
    <property type="molecule type" value="Genomic_DNA"/>
</dbReference>
<dbReference type="PIR" id="S10832">
    <property type="entry name" value="PWYCG"/>
</dbReference>
<dbReference type="RefSeq" id="WP_011243488.1">
    <property type="nucleotide sequence ID" value="NC_006576.1"/>
</dbReference>
<dbReference type="SMR" id="P08450"/>
<dbReference type="KEGG" id="syc:syc1176_c"/>
<dbReference type="eggNOG" id="COG0224">
    <property type="taxonomic scope" value="Bacteria"/>
</dbReference>
<dbReference type="Proteomes" id="UP000001175">
    <property type="component" value="Chromosome"/>
</dbReference>
<dbReference type="GO" id="GO:0031676">
    <property type="term" value="C:plasma membrane-derived thylakoid membrane"/>
    <property type="evidence" value="ECO:0007669"/>
    <property type="project" value="UniProtKB-SubCell"/>
</dbReference>
<dbReference type="GO" id="GO:0045259">
    <property type="term" value="C:proton-transporting ATP synthase complex"/>
    <property type="evidence" value="ECO:0007669"/>
    <property type="project" value="UniProtKB-KW"/>
</dbReference>
<dbReference type="GO" id="GO:0005524">
    <property type="term" value="F:ATP binding"/>
    <property type="evidence" value="ECO:0007669"/>
    <property type="project" value="UniProtKB-UniRule"/>
</dbReference>
<dbReference type="GO" id="GO:0046933">
    <property type="term" value="F:proton-transporting ATP synthase activity, rotational mechanism"/>
    <property type="evidence" value="ECO:0007669"/>
    <property type="project" value="UniProtKB-UniRule"/>
</dbReference>
<dbReference type="CDD" id="cd12151">
    <property type="entry name" value="F1-ATPase_gamma"/>
    <property type="match status" value="1"/>
</dbReference>
<dbReference type="FunFam" id="3.40.1380.10:FF:000006">
    <property type="entry name" value="ATP synthase gamma chain"/>
    <property type="match status" value="1"/>
</dbReference>
<dbReference type="FunFam" id="1.10.287.80:FF:000003">
    <property type="entry name" value="ATP synthase gamma chain, chloroplastic"/>
    <property type="match status" value="1"/>
</dbReference>
<dbReference type="FunFam" id="1.10.287.80:FF:000004">
    <property type="entry name" value="ATP synthase gamma chain, chloroplastic"/>
    <property type="match status" value="1"/>
</dbReference>
<dbReference type="Gene3D" id="3.40.1380.10">
    <property type="match status" value="1"/>
</dbReference>
<dbReference type="Gene3D" id="1.10.287.80">
    <property type="entry name" value="ATP synthase, gamma subunit, helix hairpin domain"/>
    <property type="match status" value="2"/>
</dbReference>
<dbReference type="HAMAP" id="MF_00815">
    <property type="entry name" value="ATP_synth_gamma_bact"/>
    <property type="match status" value="1"/>
</dbReference>
<dbReference type="InterPro" id="IPR035968">
    <property type="entry name" value="ATP_synth_F1_ATPase_gsu"/>
</dbReference>
<dbReference type="InterPro" id="IPR000131">
    <property type="entry name" value="ATP_synth_F1_gsu"/>
</dbReference>
<dbReference type="InterPro" id="IPR023632">
    <property type="entry name" value="ATP_synth_F1_gsu_CS"/>
</dbReference>
<dbReference type="NCBIfam" id="TIGR01146">
    <property type="entry name" value="ATPsyn_F1gamma"/>
    <property type="match status" value="1"/>
</dbReference>
<dbReference type="NCBIfam" id="NF004145">
    <property type="entry name" value="PRK05621.1-2"/>
    <property type="match status" value="1"/>
</dbReference>
<dbReference type="PANTHER" id="PTHR11693">
    <property type="entry name" value="ATP SYNTHASE GAMMA CHAIN"/>
    <property type="match status" value="1"/>
</dbReference>
<dbReference type="PANTHER" id="PTHR11693:SF41">
    <property type="entry name" value="ATP SYNTHASE GAMMA CHAIN, CHLOROPLASTIC"/>
    <property type="match status" value="1"/>
</dbReference>
<dbReference type="Pfam" id="PF00231">
    <property type="entry name" value="ATP-synt"/>
    <property type="match status" value="1"/>
</dbReference>
<dbReference type="PRINTS" id="PR00126">
    <property type="entry name" value="ATPASEGAMMA"/>
</dbReference>
<dbReference type="SUPFAM" id="SSF52943">
    <property type="entry name" value="ATP synthase (F1-ATPase), gamma subunit"/>
    <property type="match status" value="1"/>
</dbReference>
<dbReference type="PROSITE" id="PS00153">
    <property type="entry name" value="ATPASE_GAMMA"/>
    <property type="match status" value="1"/>
</dbReference>
<sequence>MANLKAIRDRIKSVRNTRKITEAMRLVAAAKVRRAQEQVLSTRPFADRLAQVLAGLQQRLQFENVDLPLLQRREVKTVALLVVSGDRGLCGGYNSNVIRRAEQRARELSAQGLDYKFVIVGRKAGQYFQRREQPIEATYSGLEQIPTAQEANDIADQLLSLFLSGTVDRVELVYTKFLSLVASNPVVQTLLPLDPQGLASSDDEIFRLTTRGGSFTVEREKLTSEVAPLPRDMIFEQDPAQILSALLPLYLSNQLLRALQEAAASELAARMTAMNSASDNANALVGQLTLVYNKARQAAITQELLEVVAGAEALNG</sequence>
<reference key="1">
    <citation type="journal article" date="1987" name="J. Mol. Biol.">
        <title>The organization and sequence of the genes for ATP synthase subunits in the cyanobacterium Synechococcus 6301. Support for an endosymbiotic origin of chloroplasts.</title>
        <authorList>
            <person name="Cozens A.L."/>
            <person name="Walker J.E."/>
        </authorList>
    </citation>
    <scope>NUCLEOTIDE SEQUENCE [GENOMIC DNA]</scope>
</reference>
<reference key="2">
    <citation type="journal article" date="2007" name="Photosyn. Res.">
        <title>Complete nucleotide sequence of the freshwater unicellular cyanobacterium Synechococcus elongatus PCC 6301 chromosome: gene content and organization.</title>
        <authorList>
            <person name="Sugita C."/>
            <person name="Ogata K."/>
            <person name="Shikata M."/>
            <person name="Jikuya H."/>
            <person name="Takano J."/>
            <person name="Furumichi M."/>
            <person name="Kanehisa M."/>
            <person name="Omata T."/>
            <person name="Sugiura M."/>
            <person name="Sugita M."/>
        </authorList>
    </citation>
    <scope>NUCLEOTIDE SEQUENCE [LARGE SCALE GENOMIC DNA]</scope>
    <source>
        <strain>ATCC 27144 / PCC 6301 / SAUG 1402/1</strain>
    </source>
</reference>
<reference key="3">
    <citation type="journal article" date="1988" name="Biochem. J.">
        <title>Expression of a gene encoding a novel ferredoxin in the cyanobacterium Synechococcus 6301.</title>
        <authorList>
            <person name="Cozens A.L."/>
            <person name="Walker J.E."/>
        </authorList>
    </citation>
    <scope>NUCLEOTIDE SEQUENCE [GENOMIC DNA] OF 306-316</scope>
</reference>
<comment type="function">
    <text evidence="1">Produces ATP from ADP in the presence of a proton gradient across the membrane. The gamma chain is believed to be important in regulating ATPase activity and the flow of protons through the CF(0) complex.</text>
</comment>
<comment type="subunit">
    <text evidence="1">F-type ATPases have 2 components, CF(1) - the catalytic core - and CF(0) - the membrane proton channel. CF(1) has five subunits: alpha(3), beta(3), gamma(1), delta(1), epsilon(1). CF(0) has three main subunits: a, b and c.</text>
</comment>
<comment type="subcellular location">
    <subcellularLocation>
        <location evidence="1">Cellular thylakoid membrane</location>
        <topology evidence="1">Peripheral membrane protein</topology>
    </subcellularLocation>
</comment>
<comment type="similarity">
    <text evidence="1">Belongs to the ATPase gamma chain family.</text>
</comment>
<accession>P08450</accession>
<accession>Q5N2V4</accession>